<name>SYD_SHESH</name>
<dbReference type="EC" id="6.1.1.12" evidence="1"/>
<dbReference type="EMBL" id="CP000821">
    <property type="protein sequence ID" value="ABV36639.1"/>
    <property type="molecule type" value="Genomic_DNA"/>
</dbReference>
<dbReference type="RefSeq" id="WP_012142374.1">
    <property type="nucleotide sequence ID" value="NC_009831.1"/>
</dbReference>
<dbReference type="SMR" id="A8FUW6"/>
<dbReference type="STRING" id="425104.Ssed_2030"/>
<dbReference type="KEGG" id="sse:Ssed_2030"/>
<dbReference type="eggNOG" id="COG0173">
    <property type="taxonomic scope" value="Bacteria"/>
</dbReference>
<dbReference type="HOGENOM" id="CLU_014330_3_2_6"/>
<dbReference type="OrthoDB" id="9802326at2"/>
<dbReference type="Proteomes" id="UP000002015">
    <property type="component" value="Chromosome"/>
</dbReference>
<dbReference type="GO" id="GO:0005737">
    <property type="term" value="C:cytoplasm"/>
    <property type="evidence" value="ECO:0007669"/>
    <property type="project" value="UniProtKB-SubCell"/>
</dbReference>
<dbReference type="GO" id="GO:0004815">
    <property type="term" value="F:aspartate-tRNA ligase activity"/>
    <property type="evidence" value="ECO:0007669"/>
    <property type="project" value="UniProtKB-UniRule"/>
</dbReference>
<dbReference type="GO" id="GO:0005524">
    <property type="term" value="F:ATP binding"/>
    <property type="evidence" value="ECO:0007669"/>
    <property type="project" value="UniProtKB-UniRule"/>
</dbReference>
<dbReference type="GO" id="GO:0003676">
    <property type="term" value="F:nucleic acid binding"/>
    <property type="evidence" value="ECO:0007669"/>
    <property type="project" value="InterPro"/>
</dbReference>
<dbReference type="GO" id="GO:0006422">
    <property type="term" value="P:aspartyl-tRNA aminoacylation"/>
    <property type="evidence" value="ECO:0007669"/>
    <property type="project" value="UniProtKB-UniRule"/>
</dbReference>
<dbReference type="CDD" id="cd00777">
    <property type="entry name" value="AspRS_core"/>
    <property type="match status" value="1"/>
</dbReference>
<dbReference type="CDD" id="cd04317">
    <property type="entry name" value="EcAspRS_like_N"/>
    <property type="match status" value="1"/>
</dbReference>
<dbReference type="FunFam" id="2.40.50.140:FF:000080">
    <property type="entry name" value="Aspartate--tRNA ligase"/>
    <property type="match status" value="1"/>
</dbReference>
<dbReference type="Gene3D" id="3.30.930.10">
    <property type="entry name" value="Bira Bifunctional Protein, Domain 2"/>
    <property type="match status" value="1"/>
</dbReference>
<dbReference type="Gene3D" id="3.30.1360.30">
    <property type="entry name" value="GAD-like domain"/>
    <property type="match status" value="1"/>
</dbReference>
<dbReference type="Gene3D" id="2.40.50.140">
    <property type="entry name" value="Nucleic acid-binding proteins"/>
    <property type="match status" value="1"/>
</dbReference>
<dbReference type="HAMAP" id="MF_00044">
    <property type="entry name" value="Asp_tRNA_synth_type1"/>
    <property type="match status" value="1"/>
</dbReference>
<dbReference type="InterPro" id="IPR004364">
    <property type="entry name" value="Aa-tRNA-synt_II"/>
</dbReference>
<dbReference type="InterPro" id="IPR006195">
    <property type="entry name" value="aa-tRNA-synth_II"/>
</dbReference>
<dbReference type="InterPro" id="IPR045864">
    <property type="entry name" value="aa-tRNA-synth_II/BPL/LPL"/>
</dbReference>
<dbReference type="InterPro" id="IPR004524">
    <property type="entry name" value="Asp-tRNA-ligase_1"/>
</dbReference>
<dbReference type="InterPro" id="IPR047089">
    <property type="entry name" value="Asp-tRNA-ligase_1_N"/>
</dbReference>
<dbReference type="InterPro" id="IPR002312">
    <property type="entry name" value="Asp/Asn-tRNA-synth_IIb"/>
</dbReference>
<dbReference type="InterPro" id="IPR047090">
    <property type="entry name" value="AspRS_core"/>
</dbReference>
<dbReference type="InterPro" id="IPR004115">
    <property type="entry name" value="GAD-like_sf"/>
</dbReference>
<dbReference type="InterPro" id="IPR029351">
    <property type="entry name" value="GAD_dom"/>
</dbReference>
<dbReference type="InterPro" id="IPR012340">
    <property type="entry name" value="NA-bd_OB-fold"/>
</dbReference>
<dbReference type="InterPro" id="IPR004365">
    <property type="entry name" value="NA-bd_OB_tRNA"/>
</dbReference>
<dbReference type="NCBIfam" id="TIGR00459">
    <property type="entry name" value="aspS_bact"/>
    <property type="match status" value="1"/>
</dbReference>
<dbReference type="NCBIfam" id="NF001750">
    <property type="entry name" value="PRK00476.1"/>
    <property type="match status" value="1"/>
</dbReference>
<dbReference type="PANTHER" id="PTHR22594:SF5">
    <property type="entry name" value="ASPARTATE--TRNA LIGASE, MITOCHONDRIAL"/>
    <property type="match status" value="1"/>
</dbReference>
<dbReference type="PANTHER" id="PTHR22594">
    <property type="entry name" value="ASPARTYL/LYSYL-TRNA SYNTHETASE"/>
    <property type="match status" value="1"/>
</dbReference>
<dbReference type="Pfam" id="PF02938">
    <property type="entry name" value="GAD"/>
    <property type="match status" value="1"/>
</dbReference>
<dbReference type="Pfam" id="PF00152">
    <property type="entry name" value="tRNA-synt_2"/>
    <property type="match status" value="1"/>
</dbReference>
<dbReference type="Pfam" id="PF01336">
    <property type="entry name" value="tRNA_anti-codon"/>
    <property type="match status" value="1"/>
</dbReference>
<dbReference type="PRINTS" id="PR01042">
    <property type="entry name" value="TRNASYNTHASP"/>
</dbReference>
<dbReference type="SUPFAM" id="SSF55681">
    <property type="entry name" value="Class II aaRS and biotin synthetases"/>
    <property type="match status" value="1"/>
</dbReference>
<dbReference type="SUPFAM" id="SSF55261">
    <property type="entry name" value="GAD domain-like"/>
    <property type="match status" value="1"/>
</dbReference>
<dbReference type="SUPFAM" id="SSF50249">
    <property type="entry name" value="Nucleic acid-binding proteins"/>
    <property type="match status" value="1"/>
</dbReference>
<dbReference type="PROSITE" id="PS50862">
    <property type="entry name" value="AA_TRNA_LIGASE_II"/>
    <property type="match status" value="1"/>
</dbReference>
<comment type="function">
    <text evidence="1">Catalyzes the attachment of L-aspartate to tRNA(Asp) in a two-step reaction: L-aspartate is first activated by ATP to form Asp-AMP and then transferred to the acceptor end of tRNA(Asp).</text>
</comment>
<comment type="catalytic activity">
    <reaction evidence="1">
        <text>tRNA(Asp) + L-aspartate + ATP = L-aspartyl-tRNA(Asp) + AMP + diphosphate</text>
        <dbReference type="Rhea" id="RHEA:19649"/>
        <dbReference type="Rhea" id="RHEA-COMP:9660"/>
        <dbReference type="Rhea" id="RHEA-COMP:9678"/>
        <dbReference type="ChEBI" id="CHEBI:29991"/>
        <dbReference type="ChEBI" id="CHEBI:30616"/>
        <dbReference type="ChEBI" id="CHEBI:33019"/>
        <dbReference type="ChEBI" id="CHEBI:78442"/>
        <dbReference type="ChEBI" id="CHEBI:78516"/>
        <dbReference type="ChEBI" id="CHEBI:456215"/>
        <dbReference type="EC" id="6.1.1.12"/>
    </reaction>
</comment>
<comment type="subunit">
    <text evidence="1">Homodimer.</text>
</comment>
<comment type="subcellular location">
    <subcellularLocation>
        <location evidence="1">Cytoplasm</location>
    </subcellularLocation>
</comment>
<comment type="similarity">
    <text evidence="1">Belongs to the class-II aminoacyl-tRNA synthetase family. Type 1 subfamily.</text>
</comment>
<protein>
    <recommendedName>
        <fullName evidence="1">Aspartate--tRNA ligase</fullName>
        <ecNumber evidence="1">6.1.1.12</ecNumber>
    </recommendedName>
    <alternativeName>
        <fullName evidence="1">Aspartyl-tRNA synthetase</fullName>
        <shortName evidence="1">AspRS</shortName>
    </alternativeName>
</protein>
<feature type="chain" id="PRO_1000074723" description="Aspartate--tRNA ligase">
    <location>
        <begin position="1"/>
        <end position="595"/>
    </location>
</feature>
<feature type="region of interest" description="Aspartate" evidence="1">
    <location>
        <begin position="197"/>
        <end position="200"/>
    </location>
</feature>
<feature type="binding site" evidence="1">
    <location>
        <position position="173"/>
    </location>
    <ligand>
        <name>L-aspartate</name>
        <dbReference type="ChEBI" id="CHEBI:29991"/>
    </ligand>
</feature>
<feature type="binding site" evidence="1">
    <location>
        <begin position="219"/>
        <end position="221"/>
    </location>
    <ligand>
        <name>ATP</name>
        <dbReference type="ChEBI" id="CHEBI:30616"/>
    </ligand>
</feature>
<feature type="binding site" evidence="1">
    <location>
        <position position="219"/>
    </location>
    <ligand>
        <name>L-aspartate</name>
        <dbReference type="ChEBI" id="CHEBI:29991"/>
    </ligand>
</feature>
<feature type="binding site" evidence="1">
    <location>
        <position position="228"/>
    </location>
    <ligand>
        <name>ATP</name>
        <dbReference type="ChEBI" id="CHEBI:30616"/>
    </ligand>
</feature>
<feature type="binding site" evidence="1">
    <location>
        <position position="449"/>
    </location>
    <ligand>
        <name>L-aspartate</name>
        <dbReference type="ChEBI" id="CHEBI:29991"/>
    </ligand>
</feature>
<feature type="binding site" evidence="1">
    <location>
        <position position="483"/>
    </location>
    <ligand>
        <name>ATP</name>
        <dbReference type="ChEBI" id="CHEBI:30616"/>
    </ligand>
</feature>
<feature type="binding site" evidence="1">
    <location>
        <position position="490"/>
    </location>
    <ligand>
        <name>L-aspartate</name>
        <dbReference type="ChEBI" id="CHEBI:29991"/>
    </ligand>
</feature>
<feature type="binding site" evidence="1">
    <location>
        <begin position="535"/>
        <end position="538"/>
    </location>
    <ligand>
        <name>ATP</name>
        <dbReference type="ChEBI" id="CHEBI:30616"/>
    </ligand>
</feature>
<reference key="1">
    <citation type="submission" date="2007-08" db="EMBL/GenBank/DDBJ databases">
        <title>Complete sequence of Shewanella sediminis HAW-EB3.</title>
        <authorList>
            <consortium name="US DOE Joint Genome Institute"/>
            <person name="Copeland A."/>
            <person name="Lucas S."/>
            <person name="Lapidus A."/>
            <person name="Barry K."/>
            <person name="Glavina del Rio T."/>
            <person name="Dalin E."/>
            <person name="Tice H."/>
            <person name="Pitluck S."/>
            <person name="Chertkov O."/>
            <person name="Brettin T."/>
            <person name="Bruce D."/>
            <person name="Detter J.C."/>
            <person name="Han C."/>
            <person name="Schmutz J."/>
            <person name="Larimer F."/>
            <person name="Land M."/>
            <person name="Hauser L."/>
            <person name="Kyrpides N."/>
            <person name="Kim E."/>
            <person name="Zhao J.-S."/>
            <person name="Richardson P."/>
        </authorList>
    </citation>
    <scope>NUCLEOTIDE SEQUENCE [LARGE SCALE GENOMIC DNA]</scope>
    <source>
        <strain>HAW-EB3</strain>
    </source>
</reference>
<evidence type="ECO:0000255" key="1">
    <source>
        <dbReference type="HAMAP-Rule" id="MF_00044"/>
    </source>
</evidence>
<organism>
    <name type="scientific">Shewanella sediminis (strain HAW-EB3)</name>
    <dbReference type="NCBI Taxonomy" id="425104"/>
    <lineage>
        <taxon>Bacteria</taxon>
        <taxon>Pseudomonadati</taxon>
        <taxon>Pseudomonadota</taxon>
        <taxon>Gammaproteobacteria</taxon>
        <taxon>Alteromonadales</taxon>
        <taxon>Shewanellaceae</taxon>
        <taxon>Shewanella</taxon>
    </lineage>
</organism>
<accession>A8FUW6</accession>
<keyword id="KW-0030">Aminoacyl-tRNA synthetase</keyword>
<keyword id="KW-0067">ATP-binding</keyword>
<keyword id="KW-0963">Cytoplasm</keyword>
<keyword id="KW-0436">Ligase</keyword>
<keyword id="KW-0547">Nucleotide-binding</keyword>
<keyword id="KW-0648">Protein biosynthesis</keyword>
<keyword id="KW-1185">Reference proteome</keyword>
<proteinExistence type="inferred from homology"/>
<sequence length="595" mass="66287">MRSQYCGDVNKSHVGQEVTLVGWVNRSRDLGGVVFLDLRDREGIVQVVYDPDLPEVFDVASTLRSEFCVQVTGLVRARPDSQVNKDMRTGEIEILGKGLTILNSAAPLPINMDKNQHNTEEQRLKYRYLDLRRPEMADRIVFRSKVTSAVRRFLDDSGFLDIETPILTKATPEGARDYLVPSRTYKGQFFALPQSPQLFKQLLMMSGFDRYYQIVKCFRDEDLRADRQPEFTQIDIETSFMSSAEVMAKTEEMTRGLFKDLLNVDLGEFPKMTFAEAMRRFGSDKPDLRNPLELIDVADILKDVEFKVFQEPANDPAGRVAVLCIPGGAKLSRKQLDEYAKYATIYGAKGLAWMKVNDLDKGLEGIQSPVLKFLNEDVVNGLLERTNAKTGDLILFGADKANIVAEAMGALRLKAGEDFDLLNGEWKPLWVVDFPMFEPTSDGGLHAMHHPFTAPMGITPEQLEADPTAAISDAYDMVLNGCELGGGSVRIHNSEMQSAVFRILGIEEEEANEKFGFLLEALRYGTPPHAGLAFGLDRIVMLMTGATSIRDVMAFPKTTTAACPLTNAPGFANPAQLVELGVNVIESEDNKEEQE</sequence>
<gene>
    <name evidence="1" type="primary">aspS</name>
    <name type="ordered locus">Ssed_2030</name>
</gene>